<accession>P29337</accession>
<gene>
    <name type="primary">bcc</name>
    <name type="ordered locus">SMU_1016</name>
</gene>
<organism>
    <name type="scientific">Streptococcus mutans serotype c (strain ATCC 700610 / UA159)</name>
    <dbReference type="NCBI Taxonomy" id="210007"/>
    <lineage>
        <taxon>Bacteria</taxon>
        <taxon>Bacillati</taxon>
        <taxon>Bacillota</taxon>
        <taxon>Bacilli</taxon>
        <taxon>Lactobacillales</taxon>
        <taxon>Streptococcaceae</taxon>
        <taxon>Streptococcus</taxon>
    </lineage>
</organism>
<name>BCCP_STRMU</name>
<dbReference type="EMBL" id="M80523">
    <property type="protein sequence ID" value="AAA03702.1"/>
    <property type="molecule type" value="Unassigned_DNA"/>
</dbReference>
<dbReference type="EMBL" id="AE014133">
    <property type="protein sequence ID" value="AAN58716.1"/>
    <property type="molecule type" value="Genomic_DNA"/>
</dbReference>
<dbReference type="RefSeq" id="NP_721410.1">
    <property type="nucleotide sequence ID" value="NC_004350.2"/>
</dbReference>
<dbReference type="RefSeq" id="WP_002263230.1">
    <property type="nucleotide sequence ID" value="NC_004350.2"/>
</dbReference>
<dbReference type="SMR" id="P29337"/>
<dbReference type="STRING" id="210007.SMU_1016"/>
<dbReference type="KEGG" id="smu:SMU_1016"/>
<dbReference type="PATRIC" id="fig|210007.7.peg.908"/>
<dbReference type="eggNOG" id="COG0511">
    <property type="taxonomic scope" value="Bacteria"/>
</dbReference>
<dbReference type="HOGENOM" id="CLU_016733_5_4_9"/>
<dbReference type="OrthoDB" id="9812676at2"/>
<dbReference type="PhylomeDB" id="P29337"/>
<dbReference type="Proteomes" id="UP000002512">
    <property type="component" value="Chromosome"/>
</dbReference>
<dbReference type="GO" id="GO:0006633">
    <property type="term" value="P:fatty acid biosynthetic process"/>
    <property type="evidence" value="ECO:0007669"/>
    <property type="project" value="UniProtKB-KW"/>
</dbReference>
<dbReference type="CDD" id="cd06850">
    <property type="entry name" value="biotinyl_domain"/>
    <property type="match status" value="1"/>
</dbReference>
<dbReference type="FunFam" id="2.40.50.100:FF:000003">
    <property type="entry name" value="Acetyl-CoA carboxylase biotin carboxyl carrier protein"/>
    <property type="match status" value="1"/>
</dbReference>
<dbReference type="Gene3D" id="2.40.50.100">
    <property type="match status" value="1"/>
</dbReference>
<dbReference type="InterPro" id="IPR001882">
    <property type="entry name" value="Biotin_BS"/>
</dbReference>
<dbReference type="InterPro" id="IPR050709">
    <property type="entry name" value="Biotin_Carboxyl_Carrier/Decarb"/>
</dbReference>
<dbReference type="InterPro" id="IPR000089">
    <property type="entry name" value="Biotin_lipoyl"/>
</dbReference>
<dbReference type="InterPro" id="IPR011053">
    <property type="entry name" value="Single_hybrid_motif"/>
</dbReference>
<dbReference type="NCBIfam" id="NF005117">
    <property type="entry name" value="PRK06549.1"/>
    <property type="match status" value="1"/>
</dbReference>
<dbReference type="PANTHER" id="PTHR45266">
    <property type="entry name" value="OXALOACETATE DECARBOXYLASE ALPHA CHAIN"/>
    <property type="match status" value="1"/>
</dbReference>
<dbReference type="PANTHER" id="PTHR45266:SF3">
    <property type="entry name" value="OXALOACETATE DECARBOXYLASE ALPHA CHAIN"/>
    <property type="match status" value="1"/>
</dbReference>
<dbReference type="Pfam" id="PF00364">
    <property type="entry name" value="Biotin_lipoyl"/>
    <property type="match status" value="1"/>
</dbReference>
<dbReference type="SUPFAM" id="SSF51230">
    <property type="entry name" value="Single hybrid motif"/>
    <property type="match status" value="1"/>
</dbReference>
<dbReference type="PROSITE" id="PS00188">
    <property type="entry name" value="BIOTIN"/>
    <property type="match status" value="1"/>
</dbReference>
<dbReference type="PROSITE" id="PS50968">
    <property type="entry name" value="BIOTINYL_LIPOYL"/>
    <property type="match status" value="1"/>
</dbReference>
<sequence length="130" mass="13601">MLRKFKISIDGKEYLVEMEEISESSVPAATPITPTTENTRAASDQKQQSQTPSPAATASAANTMPAPMPGTILKVLVNVGDTVSENQPLMILEAMKMENEIVAGMAGTVSAIHVSSGQTVNAGDNLITIA</sequence>
<keyword id="KW-0092">Biotin</keyword>
<keyword id="KW-0275">Fatty acid biosynthesis</keyword>
<keyword id="KW-0276">Fatty acid metabolism</keyword>
<keyword id="KW-0444">Lipid biosynthesis</keyword>
<keyword id="KW-0443">Lipid metabolism</keyword>
<keyword id="KW-1185">Reference proteome</keyword>
<reference key="1">
    <citation type="journal article" date="1993" name="BioTechniques">
        <title>Biotin-containing protein as a cause of false positive clones in gene probing with streptavidin/biotin.</title>
        <authorList>
            <person name="Wang D."/>
            <person name="Waye M.M."/>
            <person name="Taricani M."/>
            <person name="Buckingham K."/>
            <person name="Sandham H.J."/>
        </authorList>
    </citation>
    <scope>NUCLEOTIDE SEQUENCE [GENOMIC DNA]</scope>
    <source>
        <strain>UT-041 / Serotype c</strain>
    </source>
</reference>
<reference key="2">
    <citation type="journal article" date="2002" name="Proc. Natl. Acad. Sci. U.S.A.">
        <title>Genome sequence of Streptococcus mutans UA159, a cariogenic dental pathogen.</title>
        <authorList>
            <person name="Ajdic D.J."/>
            <person name="McShan W.M."/>
            <person name="McLaughlin R.E."/>
            <person name="Savic G."/>
            <person name="Chang J."/>
            <person name="Carson M.B."/>
            <person name="Primeaux C."/>
            <person name="Tian R."/>
            <person name="Kenton S."/>
            <person name="Jia H.G."/>
            <person name="Lin S.P."/>
            <person name="Qian Y."/>
            <person name="Li S."/>
            <person name="Zhu H."/>
            <person name="Najar F.Z."/>
            <person name="Lai H."/>
            <person name="White J."/>
            <person name="Roe B.A."/>
            <person name="Ferretti J.J."/>
        </authorList>
    </citation>
    <scope>NUCLEOTIDE SEQUENCE [LARGE SCALE GENOMIC DNA]</scope>
    <source>
        <strain>ATCC 700610 / UA159</strain>
    </source>
</reference>
<protein>
    <recommendedName>
        <fullName>Biotin carboxyl carrier protein</fullName>
        <shortName>BCCP</shortName>
    </recommendedName>
</protein>
<evidence type="ECO:0000250" key="1"/>
<evidence type="ECO:0000255" key="2">
    <source>
        <dbReference type="PROSITE-ProRule" id="PRU01066"/>
    </source>
</evidence>
<evidence type="ECO:0000256" key="3">
    <source>
        <dbReference type="SAM" id="MobiDB-lite"/>
    </source>
</evidence>
<evidence type="ECO:0000305" key="4"/>
<proteinExistence type="inferred from homology"/>
<feature type="chain" id="PRO_0000146812" description="Biotin carboxyl carrier protein">
    <location>
        <begin position="1"/>
        <end position="130"/>
    </location>
</feature>
<feature type="domain" description="Biotinyl-binding" evidence="2">
    <location>
        <begin position="55"/>
        <end position="130"/>
    </location>
</feature>
<feature type="region of interest" description="Disordered" evidence="3">
    <location>
        <begin position="20"/>
        <end position="64"/>
    </location>
</feature>
<feature type="compositionally biased region" description="Polar residues" evidence="3">
    <location>
        <begin position="23"/>
        <end position="46"/>
    </location>
</feature>
<feature type="compositionally biased region" description="Low complexity" evidence="3">
    <location>
        <begin position="47"/>
        <end position="64"/>
    </location>
</feature>
<feature type="modified residue" description="N6-biotinyllysine" evidence="1 2">
    <location>
        <position position="96"/>
    </location>
</feature>
<feature type="sequence conflict" description="In Ref. 1; AAA03702." evidence="4" ref="1">
    <original>N</original>
    <variation>D</variation>
    <location>
        <position position="121"/>
    </location>
</feature>